<proteinExistence type="inferred from homology"/>
<name>TRM5_CANAW</name>
<dbReference type="EC" id="2.1.1.228" evidence="1"/>
<dbReference type="EMBL" id="CH672349">
    <property type="protein sequence ID" value="EEQ45127.1"/>
    <property type="molecule type" value="Genomic_DNA"/>
</dbReference>
<dbReference type="SMR" id="C4YH95"/>
<dbReference type="PaxDb" id="5476-C4YH95"/>
<dbReference type="VEuPathDB" id="FungiDB:CAWG_03440"/>
<dbReference type="HOGENOM" id="CLU_022610_2_2_1"/>
<dbReference type="OMA" id="VGSHSQF"/>
<dbReference type="OrthoDB" id="7948at766764"/>
<dbReference type="Proteomes" id="UP000001429">
    <property type="component" value="Chromosome 4, Supercontig 1.4"/>
</dbReference>
<dbReference type="GO" id="GO:0005759">
    <property type="term" value="C:mitochondrial matrix"/>
    <property type="evidence" value="ECO:0007669"/>
    <property type="project" value="UniProtKB-SubCell"/>
</dbReference>
<dbReference type="GO" id="GO:0005634">
    <property type="term" value="C:nucleus"/>
    <property type="evidence" value="ECO:0007669"/>
    <property type="project" value="UniProtKB-SubCell"/>
</dbReference>
<dbReference type="GO" id="GO:0052906">
    <property type="term" value="F:tRNA (guanine(37)-N1)-methyltransferase activity"/>
    <property type="evidence" value="ECO:0007669"/>
    <property type="project" value="UniProtKB-UniRule"/>
</dbReference>
<dbReference type="GO" id="GO:0070901">
    <property type="term" value="P:mitochondrial tRNA methylation"/>
    <property type="evidence" value="ECO:0007669"/>
    <property type="project" value="TreeGrafter"/>
</dbReference>
<dbReference type="GO" id="GO:0002939">
    <property type="term" value="P:tRNA N1-guanine methylation"/>
    <property type="evidence" value="ECO:0007669"/>
    <property type="project" value="TreeGrafter"/>
</dbReference>
<dbReference type="FunFam" id="3.30.300.110:FF:000001">
    <property type="entry name" value="tRNA (guanine(37)-N1)-methyltransferase"/>
    <property type="match status" value="1"/>
</dbReference>
<dbReference type="Gene3D" id="3.30.300.110">
    <property type="entry name" value="Met-10+ protein-like domains"/>
    <property type="match status" value="1"/>
</dbReference>
<dbReference type="Gene3D" id="3.40.50.150">
    <property type="entry name" value="Vaccinia Virus protein VP39"/>
    <property type="match status" value="1"/>
</dbReference>
<dbReference type="HAMAP" id="MF_03152">
    <property type="entry name" value="TRM5"/>
    <property type="match status" value="1"/>
</dbReference>
<dbReference type="InterPro" id="IPR030382">
    <property type="entry name" value="MeTrfase_TRM5/TYW2"/>
</dbReference>
<dbReference type="InterPro" id="IPR029063">
    <property type="entry name" value="SAM-dependent_MTases_sf"/>
</dbReference>
<dbReference type="InterPro" id="IPR056743">
    <property type="entry name" value="TRM5-TYW2-like_MTfase"/>
</dbReference>
<dbReference type="InterPro" id="IPR056744">
    <property type="entry name" value="TRM5/TYW2-like_N"/>
</dbReference>
<dbReference type="InterPro" id="IPR025792">
    <property type="entry name" value="tRNA_Gua_MeTrfase_euk"/>
</dbReference>
<dbReference type="PANTHER" id="PTHR23245:SF36">
    <property type="entry name" value="TRNA (GUANINE(37)-N1)-METHYLTRANSFERASE"/>
    <property type="match status" value="1"/>
</dbReference>
<dbReference type="PANTHER" id="PTHR23245">
    <property type="entry name" value="TRNA METHYLTRANSFERASE"/>
    <property type="match status" value="1"/>
</dbReference>
<dbReference type="Pfam" id="PF02475">
    <property type="entry name" value="TRM5-TYW2_MTfase"/>
    <property type="match status" value="1"/>
</dbReference>
<dbReference type="Pfam" id="PF25133">
    <property type="entry name" value="TYW2_N_2"/>
    <property type="match status" value="1"/>
</dbReference>
<dbReference type="SUPFAM" id="SSF53335">
    <property type="entry name" value="S-adenosyl-L-methionine-dependent methyltransferases"/>
    <property type="match status" value="1"/>
</dbReference>
<dbReference type="PROSITE" id="PS51684">
    <property type="entry name" value="SAM_MT_TRM5_TYW2"/>
    <property type="match status" value="1"/>
</dbReference>
<sequence>MSKFSPPINRNMVELDRSFFYKEVPLLAAYFPNPKFLGQFVKSCQNDILYVQTVKHIISMDDSKAILLRDDVKSISDLNPETQLKINEFGIILKPYTLKLDYSFWKSEEILKSILPENLIDDVPSGFSQAGHLAHINLRDEYKPFGKLIGQVILDKNPSVLTVVDKVNTIANKFRTFPLELLAGEPNYIVEQSESGCKFKFDFSKVYWNSRLSTEHERIIGKFNPGDVVGDVFGGVGPFAIPASKKNVIVLANDLNPESYKYLQENIKINKVEPFIKPFNLDGREFIRKAPELLLQWHNSQNGIIEKIIIKKVSIDDNKTKKIFERKPIIETTKIPKFYHHFVMNLPDSALTFLDEFIGLYGSNPQLKTDPEFKLPIIHVHCFEKFENNENPTPEELHNRVYEKICKLIQFPLNKKKVEFHEVRMVSPTKPMFCVSFELPEEVAFKQTK</sequence>
<feature type="chain" id="PRO_0000414162" description="tRNA (guanine(37)-N(1))-methyltransferase">
    <location>
        <begin position="1"/>
        <end position="449"/>
    </location>
</feature>
<feature type="binding site" evidence="1">
    <location>
        <position position="216"/>
    </location>
    <ligand>
        <name>S-adenosyl-L-methionine</name>
        <dbReference type="ChEBI" id="CHEBI:59789"/>
    </ligand>
</feature>
<feature type="binding site" evidence="1">
    <location>
        <begin position="254"/>
        <end position="255"/>
    </location>
    <ligand>
        <name>S-adenosyl-L-methionine</name>
        <dbReference type="ChEBI" id="CHEBI:59789"/>
    </ligand>
</feature>
<feature type="binding site" evidence="1">
    <location>
        <begin position="282"/>
        <end position="283"/>
    </location>
    <ligand>
        <name>S-adenosyl-L-methionine</name>
        <dbReference type="ChEBI" id="CHEBI:59789"/>
    </ligand>
</feature>
<feature type="binding site" evidence="1">
    <location>
        <position position="345"/>
    </location>
    <ligand>
        <name>S-adenosyl-L-methionine</name>
        <dbReference type="ChEBI" id="CHEBI:59789"/>
    </ligand>
</feature>
<gene>
    <name evidence="1" type="primary">TRM5</name>
    <name type="ORF">CAWG_03440</name>
</gene>
<accession>C4YH95</accession>
<comment type="function">
    <text evidence="1">Specifically methylates the N1 position of guanosine-37 in various cytoplasmic and mitochondrial tRNAs. Methylation is not dependent on the nature of the nucleoside 5' of the target nucleoside. This is the first step in the biosynthesis of wybutosine (yW), a modified base adjacent to the anticodon of tRNAs and required for accurate decoding.</text>
</comment>
<comment type="catalytic activity">
    <reaction evidence="1">
        <text>guanosine(37) in tRNA + S-adenosyl-L-methionine = N(1)-methylguanosine(37) in tRNA + S-adenosyl-L-homocysteine + H(+)</text>
        <dbReference type="Rhea" id="RHEA:36899"/>
        <dbReference type="Rhea" id="RHEA-COMP:10145"/>
        <dbReference type="Rhea" id="RHEA-COMP:10147"/>
        <dbReference type="ChEBI" id="CHEBI:15378"/>
        <dbReference type="ChEBI" id="CHEBI:57856"/>
        <dbReference type="ChEBI" id="CHEBI:59789"/>
        <dbReference type="ChEBI" id="CHEBI:73542"/>
        <dbReference type="ChEBI" id="CHEBI:74269"/>
        <dbReference type="EC" id="2.1.1.228"/>
    </reaction>
</comment>
<comment type="subunit">
    <text evidence="1">Monomer.</text>
</comment>
<comment type="subcellular location">
    <subcellularLocation>
        <location evidence="1">Mitochondrion matrix</location>
    </subcellularLocation>
    <subcellularLocation>
        <location evidence="1">Nucleus</location>
    </subcellularLocation>
    <subcellularLocation>
        <location evidence="1">Cytoplasm</location>
    </subcellularLocation>
    <text evidence="1">Predominantly in the mitochondria and in the nucleus.</text>
</comment>
<comment type="similarity">
    <text evidence="2">Belongs to the class I-like SAM-binding methyltransferase superfamily. TRM5/TYW2 family.</text>
</comment>
<keyword id="KW-0963">Cytoplasm</keyword>
<keyword id="KW-0489">Methyltransferase</keyword>
<keyword id="KW-0496">Mitochondrion</keyword>
<keyword id="KW-0539">Nucleus</keyword>
<keyword id="KW-0949">S-adenosyl-L-methionine</keyword>
<keyword id="KW-0808">Transferase</keyword>
<keyword id="KW-0819">tRNA processing</keyword>
<organism>
    <name type="scientific">Candida albicans (strain WO-1)</name>
    <name type="common">Yeast</name>
    <dbReference type="NCBI Taxonomy" id="294748"/>
    <lineage>
        <taxon>Eukaryota</taxon>
        <taxon>Fungi</taxon>
        <taxon>Dikarya</taxon>
        <taxon>Ascomycota</taxon>
        <taxon>Saccharomycotina</taxon>
        <taxon>Pichiomycetes</taxon>
        <taxon>Debaryomycetaceae</taxon>
        <taxon>Candida/Lodderomyces clade</taxon>
        <taxon>Candida</taxon>
    </lineage>
</organism>
<evidence type="ECO:0000255" key="1">
    <source>
        <dbReference type="HAMAP-Rule" id="MF_03152"/>
    </source>
</evidence>
<evidence type="ECO:0000305" key="2"/>
<reference key="1">
    <citation type="journal article" date="2009" name="Nature">
        <title>Evolution of pathogenicity and sexual reproduction in eight Candida genomes.</title>
        <authorList>
            <person name="Butler G."/>
            <person name="Rasmussen M.D."/>
            <person name="Lin M.F."/>
            <person name="Santos M.A.S."/>
            <person name="Sakthikumar S."/>
            <person name="Munro C.A."/>
            <person name="Rheinbay E."/>
            <person name="Grabherr M."/>
            <person name="Forche A."/>
            <person name="Reedy J.L."/>
            <person name="Agrafioti I."/>
            <person name="Arnaud M.B."/>
            <person name="Bates S."/>
            <person name="Brown A.J.P."/>
            <person name="Brunke S."/>
            <person name="Costanzo M.C."/>
            <person name="Fitzpatrick D.A."/>
            <person name="de Groot P.W.J."/>
            <person name="Harris D."/>
            <person name="Hoyer L.L."/>
            <person name="Hube B."/>
            <person name="Klis F.M."/>
            <person name="Kodira C."/>
            <person name="Lennard N."/>
            <person name="Logue M.E."/>
            <person name="Martin R."/>
            <person name="Neiman A.M."/>
            <person name="Nikolaou E."/>
            <person name="Quail M.A."/>
            <person name="Quinn J."/>
            <person name="Santos M.C."/>
            <person name="Schmitzberger F.F."/>
            <person name="Sherlock G."/>
            <person name="Shah P."/>
            <person name="Silverstein K.A.T."/>
            <person name="Skrzypek M.S."/>
            <person name="Soll D."/>
            <person name="Staggs R."/>
            <person name="Stansfield I."/>
            <person name="Stumpf M.P.H."/>
            <person name="Sudbery P.E."/>
            <person name="Srikantha T."/>
            <person name="Zeng Q."/>
            <person name="Berman J."/>
            <person name="Berriman M."/>
            <person name="Heitman J."/>
            <person name="Gow N.A.R."/>
            <person name="Lorenz M.C."/>
            <person name="Birren B.W."/>
            <person name="Kellis M."/>
            <person name="Cuomo C.A."/>
        </authorList>
    </citation>
    <scope>NUCLEOTIDE SEQUENCE [LARGE SCALE GENOMIC DNA]</scope>
    <source>
        <strain>WO-1</strain>
    </source>
</reference>
<protein>
    <recommendedName>
        <fullName evidence="1">tRNA (guanine(37)-N(1))-methyltransferase</fullName>
        <ecNumber evidence="1">2.1.1.228</ecNumber>
    </recommendedName>
    <alternativeName>
        <fullName evidence="1">M1G-methyltransferase</fullName>
    </alternativeName>
    <alternativeName>
        <fullName evidence="1">tRNA [GM37] methyltransferase</fullName>
    </alternativeName>
    <alternativeName>
        <fullName evidence="1">tRNA methyltransferase 5</fullName>
    </alternativeName>
</protein>